<dbReference type="EC" id="4.2.1.126" evidence="1"/>
<dbReference type="EMBL" id="CP000243">
    <property type="protein sequence ID" value="ABE08220.1"/>
    <property type="molecule type" value="Genomic_DNA"/>
</dbReference>
<dbReference type="RefSeq" id="WP_001175632.1">
    <property type="nucleotide sequence ID" value="NZ_CP064825.1"/>
</dbReference>
<dbReference type="SMR" id="Q1R8U4"/>
<dbReference type="KEGG" id="eci:UTI89_C2760"/>
<dbReference type="HOGENOM" id="CLU_049049_1_1_6"/>
<dbReference type="UniPathway" id="UPA00342"/>
<dbReference type="UniPathway" id="UPA00343"/>
<dbReference type="UniPathway" id="UPA00544"/>
<dbReference type="Proteomes" id="UP000001952">
    <property type="component" value="Chromosome"/>
</dbReference>
<dbReference type="GO" id="GO:0097367">
    <property type="term" value="F:carbohydrate derivative binding"/>
    <property type="evidence" value="ECO:0007669"/>
    <property type="project" value="InterPro"/>
</dbReference>
<dbReference type="GO" id="GO:0016835">
    <property type="term" value="F:carbon-oxygen lyase activity"/>
    <property type="evidence" value="ECO:0007669"/>
    <property type="project" value="UniProtKB-UniRule"/>
</dbReference>
<dbReference type="GO" id="GO:0016803">
    <property type="term" value="F:ether hydrolase activity"/>
    <property type="evidence" value="ECO:0007669"/>
    <property type="project" value="TreeGrafter"/>
</dbReference>
<dbReference type="GO" id="GO:0097175">
    <property type="term" value="P:1,6-anhydro-N-acetyl-beta-muramic acid catabolic process"/>
    <property type="evidence" value="ECO:0007669"/>
    <property type="project" value="UniProtKB-UniRule"/>
</dbReference>
<dbReference type="GO" id="GO:0046348">
    <property type="term" value="P:amino sugar catabolic process"/>
    <property type="evidence" value="ECO:0007669"/>
    <property type="project" value="InterPro"/>
</dbReference>
<dbReference type="GO" id="GO:0097173">
    <property type="term" value="P:N-acetylmuramic acid catabolic process"/>
    <property type="evidence" value="ECO:0007669"/>
    <property type="project" value="UniProtKB-UniPathway"/>
</dbReference>
<dbReference type="GO" id="GO:0009254">
    <property type="term" value="P:peptidoglycan turnover"/>
    <property type="evidence" value="ECO:0007669"/>
    <property type="project" value="UniProtKB-UniRule"/>
</dbReference>
<dbReference type="CDD" id="cd05007">
    <property type="entry name" value="SIS_Etherase"/>
    <property type="match status" value="1"/>
</dbReference>
<dbReference type="FunFam" id="1.10.8.1080:FF:000001">
    <property type="entry name" value="N-acetylmuramic acid 6-phosphate etherase"/>
    <property type="match status" value="1"/>
</dbReference>
<dbReference type="FunFam" id="3.40.50.10490:FF:000014">
    <property type="entry name" value="N-acetylmuramic acid 6-phosphate etherase"/>
    <property type="match status" value="1"/>
</dbReference>
<dbReference type="Gene3D" id="1.10.8.1080">
    <property type="match status" value="1"/>
</dbReference>
<dbReference type="Gene3D" id="3.40.50.10490">
    <property type="entry name" value="Glucose-6-phosphate isomerase like protein, domain 1"/>
    <property type="match status" value="1"/>
</dbReference>
<dbReference type="HAMAP" id="MF_00068">
    <property type="entry name" value="MurQ"/>
    <property type="match status" value="1"/>
</dbReference>
<dbReference type="InterPro" id="IPR005488">
    <property type="entry name" value="Etherase_MurQ"/>
</dbReference>
<dbReference type="InterPro" id="IPR005486">
    <property type="entry name" value="Glucokinase_regulatory_CS"/>
</dbReference>
<dbReference type="InterPro" id="IPR040190">
    <property type="entry name" value="MURQ/GCKR"/>
</dbReference>
<dbReference type="InterPro" id="IPR001347">
    <property type="entry name" value="SIS_dom"/>
</dbReference>
<dbReference type="InterPro" id="IPR046348">
    <property type="entry name" value="SIS_dom_sf"/>
</dbReference>
<dbReference type="NCBIfam" id="TIGR00274">
    <property type="entry name" value="N-acetylmuramic acid 6-phosphate etherase"/>
    <property type="match status" value="1"/>
</dbReference>
<dbReference type="NCBIfam" id="NF003915">
    <property type="entry name" value="PRK05441.1"/>
    <property type="match status" value="1"/>
</dbReference>
<dbReference type="NCBIfam" id="NF009222">
    <property type="entry name" value="PRK12570.1"/>
    <property type="match status" value="1"/>
</dbReference>
<dbReference type="PANTHER" id="PTHR10088">
    <property type="entry name" value="GLUCOKINASE REGULATORY PROTEIN"/>
    <property type="match status" value="1"/>
</dbReference>
<dbReference type="PANTHER" id="PTHR10088:SF4">
    <property type="entry name" value="GLUCOKINASE REGULATORY PROTEIN"/>
    <property type="match status" value="1"/>
</dbReference>
<dbReference type="Pfam" id="PF22645">
    <property type="entry name" value="GKRP_SIS_N"/>
    <property type="match status" value="1"/>
</dbReference>
<dbReference type="SUPFAM" id="SSF53697">
    <property type="entry name" value="SIS domain"/>
    <property type="match status" value="1"/>
</dbReference>
<dbReference type="PROSITE" id="PS01272">
    <property type="entry name" value="GCKR"/>
    <property type="match status" value="1"/>
</dbReference>
<dbReference type="PROSITE" id="PS51464">
    <property type="entry name" value="SIS"/>
    <property type="match status" value="1"/>
</dbReference>
<keyword id="KW-0119">Carbohydrate metabolism</keyword>
<keyword id="KW-0456">Lyase</keyword>
<gene>
    <name evidence="1" type="primary">murQ</name>
    <name type="ordered locus">UTI89_C2760</name>
</gene>
<accession>Q1R8U4</accession>
<sequence length="298" mass="31162">MQLEKMITEGSNAASAEIDRVSTLEMCRIINDEDKTVPLAVERVLPDIAAAIDVIHTQVSGGGRLIYLGAGTSGRLGILDASECPPTYGVKPGLVVGLIAGGEYAIQHAVEGAEDSREGGVNDLKNINLTAQDVVVGIAASGRTPYVIAGLEYARQLGCRTVGISCNPGSAVSSTAEFAITPVVGAEVVTGSSRMKAGTAQKLVLNMLSTGLMIKSGKVFGNLMVDVVATNEKLHVRQVNIVKNATGCNAEQAEAALIACERNCKTAIVMVLKNLDADEAKKCLDQHGGFIRKALEKE</sequence>
<feature type="chain" id="PRO_0000249624" description="N-acetylmuramic acid 6-phosphate etherase">
    <location>
        <begin position="1"/>
        <end position="298"/>
    </location>
</feature>
<feature type="domain" description="SIS" evidence="1">
    <location>
        <begin position="55"/>
        <end position="218"/>
    </location>
</feature>
<feature type="active site" description="Proton donor" evidence="1">
    <location>
        <position position="83"/>
    </location>
</feature>
<feature type="active site" evidence="1">
    <location>
        <position position="114"/>
    </location>
</feature>
<proteinExistence type="inferred from homology"/>
<protein>
    <recommendedName>
        <fullName evidence="1">N-acetylmuramic acid 6-phosphate etherase</fullName>
        <shortName evidence="1">MurNAc-6-P etherase</shortName>
        <ecNumber evidence="1">4.2.1.126</ecNumber>
    </recommendedName>
    <alternativeName>
        <fullName evidence="1">N-acetylmuramic acid 6-phosphate hydrolase</fullName>
    </alternativeName>
    <alternativeName>
        <fullName evidence="1">N-acetylmuramic acid 6-phosphate lyase</fullName>
    </alternativeName>
</protein>
<organism>
    <name type="scientific">Escherichia coli (strain UTI89 / UPEC)</name>
    <dbReference type="NCBI Taxonomy" id="364106"/>
    <lineage>
        <taxon>Bacteria</taxon>
        <taxon>Pseudomonadati</taxon>
        <taxon>Pseudomonadota</taxon>
        <taxon>Gammaproteobacteria</taxon>
        <taxon>Enterobacterales</taxon>
        <taxon>Enterobacteriaceae</taxon>
        <taxon>Escherichia</taxon>
    </lineage>
</organism>
<comment type="function">
    <text evidence="1">Specifically catalyzes the cleavage of the D-lactyl ether substituent of MurNAc 6-phosphate, producing GlcNAc 6-phosphate and D-lactate. Together with AnmK, is also required for the utilization of anhydro-N-acetylmuramic acid (anhMurNAc) either imported from the medium or derived from its own cell wall murein, and thus plays a role in cell wall recycling.</text>
</comment>
<comment type="catalytic activity">
    <reaction evidence="1">
        <text>N-acetyl-D-muramate 6-phosphate + H2O = N-acetyl-D-glucosamine 6-phosphate + (R)-lactate</text>
        <dbReference type="Rhea" id="RHEA:26410"/>
        <dbReference type="ChEBI" id="CHEBI:15377"/>
        <dbReference type="ChEBI" id="CHEBI:16004"/>
        <dbReference type="ChEBI" id="CHEBI:57513"/>
        <dbReference type="ChEBI" id="CHEBI:58722"/>
        <dbReference type="EC" id="4.2.1.126"/>
    </reaction>
</comment>
<comment type="pathway">
    <text evidence="1">Amino-sugar metabolism; 1,6-anhydro-N-acetylmuramate degradation.</text>
</comment>
<comment type="pathway">
    <text evidence="1">Amino-sugar metabolism; N-acetylmuramate degradation.</text>
</comment>
<comment type="pathway">
    <text evidence="1">Cell wall biogenesis; peptidoglycan recycling.</text>
</comment>
<comment type="subunit">
    <text evidence="1">Homodimer.</text>
</comment>
<comment type="induction">
    <text evidence="1">Induced by MurNAc 6-phosphate that releases the repressor MurR from the DNA. Repressed by MurR in the absence of MurNAc 6-phosphate.</text>
</comment>
<comment type="miscellaneous">
    <text evidence="1">A lyase-type mechanism (elimination/hydration) is suggested for the cleavage of the lactyl ether bond of MurNAc 6-phosphate, with the formation of an alpha,beta-unsaturated aldehyde intermediate with (E)-stereochemistry, followed by the syn addition of water to give product.</text>
</comment>
<comment type="similarity">
    <text evidence="1">Belongs to the GCKR-like family. MurNAc-6-P etherase subfamily.</text>
</comment>
<reference key="1">
    <citation type="journal article" date="2006" name="Proc. Natl. Acad. Sci. U.S.A.">
        <title>Identification of genes subject to positive selection in uropathogenic strains of Escherichia coli: a comparative genomics approach.</title>
        <authorList>
            <person name="Chen S.L."/>
            <person name="Hung C.-S."/>
            <person name="Xu J."/>
            <person name="Reigstad C.S."/>
            <person name="Magrini V."/>
            <person name="Sabo A."/>
            <person name="Blasiar D."/>
            <person name="Bieri T."/>
            <person name="Meyer R.R."/>
            <person name="Ozersky P."/>
            <person name="Armstrong J.R."/>
            <person name="Fulton R.S."/>
            <person name="Latreille J.P."/>
            <person name="Spieth J."/>
            <person name="Hooton T.M."/>
            <person name="Mardis E.R."/>
            <person name="Hultgren S.J."/>
            <person name="Gordon J.I."/>
        </authorList>
    </citation>
    <scope>NUCLEOTIDE SEQUENCE [LARGE SCALE GENOMIC DNA]</scope>
    <source>
        <strain>UTI89 / UPEC</strain>
    </source>
</reference>
<evidence type="ECO:0000255" key="1">
    <source>
        <dbReference type="HAMAP-Rule" id="MF_00068"/>
    </source>
</evidence>
<name>MURQ_ECOUT</name>